<organism>
    <name type="scientific">Xenopus laevis</name>
    <name type="common">African clawed frog</name>
    <dbReference type="NCBI Taxonomy" id="8355"/>
    <lineage>
        <taxon>Eukaryota</taxon>
        <taxon>Metazoa</taxon>
        <taxon>Chordata</taxon>
        <taxon>Craniata</taxon>
        <taxon>Vertebrata</taxon>
        <taxon>Euteleostomi</taxon>
        <taxon>Amphibia</taxon>
        <taxon>Batrachia</taxon>
        <taxon>Anura</taxon>
        <taxon>Pipoidea</taxon>
        <taxon>Pipidae</taxon>
        <taxon>Xenopodinae</taxon>
        <taxon>Xenopus</taxon>
        <taxon>Xenopus</taxon>
    </lineage>
</organism>
<accession>Q6GQD0</accession>
<dbReference type="EMBL" id="BC072815">
    <property type="protein sequence ID" value="AAH72815.1"/>
    <property type="molecule type" value="mRNA"/>
</dbReference>
<dbReference type="RefSeq" id="NP_001085472.1">
    <property type="nucleotide sequence ID" value="NM_001092003.1"/>
</dbReference>
<dbReference type="SMR" id="Q6GQD0"/>
<dbReference type="DNASU" id="443898"/>
<dbReference type="GeneID" id="443898"/>
<dbReference type="KEGG" id="xla:443898"/>
<dbReference type="AGR" id="Xenbase:XB-GENE-6251717"/>
<dbReference type="CTD" id="443898"/>
<dbReference type="Xenbase" id="XB-GENE-6251717">
    <property type="gene designation" value="ncbp1.S"/>
</dbReference>
<dbReference type="OrthoDB" id="10252707at2759"/>
<dbReference type="Proteomes" id="UP000186698">
    <property type="component" value="Chromosome 1S"/>
</dbReference>
<dbReference type="Bgee" id="443898">
    <property type="expression patterns" value="Expressed in egg cell and 19 other cell types or tissues"/>
</dbReference>
<dbReference type="GO" id="GO:0005737">
    <property type="term" value="C:cytoplasm"/>
    <property type="evidence" value="ECO:0007669"/>
    <property type="project" value="UniProtKB-SubCell"/>
</dbReference>
<dbReference type="GO" id="GO:0005846">
    <property type="term" value="C:nuclear cap binding complex"/>
    <property type="evidence" value="ECO:0000318"/>
    <property type="project" value="GO_Central"/>
</dbReference>
<dbReference type="GO" id="GO:0005634">
    <property type="term" value="C:nucleus"/>
    <property type="evidence" value="ECO:0000318"/>
    <property type="project" value="GO_Central"/>
</dbReference>
<dbReference type="GO" id="GO:0003729">
    <property type="term" value="F:mRNA binding"/>
    <property type="evidence" value="ECO:0000318"/>
    <property type="project" value="GO_Central"/>
</dbReference>
<dbReference type="GO" id="GO:0000339">
    <property type="term" value="F:RNA cap binding"/>
    <property type="evidence" value="ECO:0000318"/>
    <property type="project" value="GO_Central"/>
</dbReference>
<dbReference type="GO" id="GO:0006370">
    <property type="term" value="P:7-methylguanosine mRNA capping"/>
    <property type="evidence" value="ECO:0007669"/>
    <property type="project" value="UniProtKB-KW"/>
</dbReference>
<dbReference type="GO" id="GO:0006406">
    <property type="term" value="P:mRNA export from nucleus"/>
    <property type="evidence" value="ECO:0000250"/>
    <property type="project" value="UniProtKB"/>
</dbReference>
<dbReference type="GO" id="GO:0000184">
    <property type="term" value="P:nuclear-transcribed mRNA catabolic process, nonsense-mediated decay"/>
    <property type="evidence" value="ECO:0000318"/>
    <property type="project" value="GO_Central"/>
</dbReference>
<dbReference type="GO" id="GO:0050684">
    <property type="term" value="P:regulation of mRNA processing"/>
    <property type="evidence" value="ECO:0000318"/>
    <property type="project" value="GO_Central"/>
</dbReference>
<dbReference type="GO" id="GO:0006417">
    <property type="term" value="P:regulation of translation"/>
    <property type="evidence" value="ECO:0007669"/>
    <property type="project" value="UniProtKB-KW"/>
</dbReference>
<dbReference type="GO" id="GO:0031047">
    <property type="term" value="P:regulatory ncRNA-mediated gene silencing"/>
    <property type="evidence" value="ECO:0007669"/>
    <property type="project" value="UniProtKB-KW"/>
</dbReference>
<dbReference type="GO" id="GO:0008380">
    <property type="term" value="P:RNA splicing"/>
    <property type="evidence" value="ECO:0007669"/>
    <property type="project" value="UniProtKB-KW"/>
</dbReference>
<dbReference type="FunFam" id="1.25.40.180:FF:000021">
    <property type="entry name" value="Nuclear cap binding protein subunit 1"/>
    <property type="match status" value="1"/>
</dbReference>
<dbReference type="FunFam" id="1.25.40.180:FF:000010">
    <property type="entry name" value="Nuclear cap-binding protein subunit 1"/>
    <property type="match status" value="1"/>
</dbReference>
<dbReference type="Gene3D" id="1.25.40.180">
    <property type="match status" value="3"/>
</dbReference>
<dbReference type="InterPro" id="IPR016024">
    <property type="entry name" value="ARM-type_fold"/>
</dbReference>
<dbReference type="InterPro" id="IPR027159">
    <property type="entry name" value="CBP80"/>
</dbReference>
<dbReference type="InterPro" id="IPR015172">
    <property type="entry name" value="MIF4G-like_typ-1"/>
</dbReference>
<dbReference type="InterPro" id="IPR015174">
    <property type="entry name" value="MIF4G-like_typ-2"/>
</dbReference>
<dbReference type="InterPro" id="IPR003890">
    <property type="entry name" value="MIF4G-like_typ-3"/>
</dbReference>
<dbReference type="PANTHER" id="PTHR12412">
    <property type="entry name" value="CAP BINDING PROTEIN"/>
    <property type="match status" value="1"/>
</dbReference>
<dbReference type="PANTHER" id="PTHR12412:SF2">
    <property type="entry name" value="NUCLEAR CAP-BINDING PROTEIN SUBUNIT 1"/>
    <property type="match status" value="1"/>
</dbReference>
<dbReference type="Pfam" id="PF02854">
    <property type="entry name" value="MIF4G"/>
    <property type="match status" value="1"/>
</dbReference>
<dbReference type="Pfam" id="PF09088">
    <property type="entry name" value="MIF4G_like"/>
    <property type="match status" value="1"/>
</dbReference>
<dbReference type="Pfam" id="PF09090">
    <property type="entry name" value="MIF4G_like_2"/>
    <property type="match status" value="1"/>
</dbReference>
<dbReference type="SMART" id="SM00543">
    <property type="entry name" value="MIF4G"/>
    <property type="match status" value="1"/>
</dbReference>
<dbReference type="SUPFAM" id="SSF48371">
    <property type="entry name" value="ARM repeat"/>
    <property type="match status" value="3"/>
</dbReference>
<feature type="chain" id="PRO_0000239783" description="Nuclear cap-binding protein subunit 1-B">
    <location>
        <begin position="1"/>
        <end position="791"/>
    </location>
</feature>
<feature type="domain" description="MIF4G">
    <location>
        <begin position="28"/>
        <end position="240"/>
    </location>
</feature>
<feature type="region of interest" description="Disordered" evidence="3">
    <location>
        <begin position="1"/>
        <end position="24"/>
    </location>
</feature>
<feature type="region of interest" description="Disordered" evidence="3">
    <location>
        <begin position="664"/>
        <end position="687"/>
    </location>
</feature>
<feature type="coiled-coil region" evidence="2">
    <location>
        <begin position="641"/>
        <end position="714"/>
    </location>
</feature>
<reference key="1">
    <citation type="submission" date="2004-06" db="EMBL/GenBank/DDBJ databases">
        <authorList>
            <consortium name="NIH - Xenopus Gene Collection (XGC) project"/>
        </authorList>
    </citation>
    <scope>NUCLEOTIDE SEQUENCE [LARGE SCALE MRNA]</scope>
    <source>
        <tissue>Embryo</tissue>
    </source>
</reference>
<sequence length="791" mass="92093">MSRRRHSDENDGGQPHKRRRTSEPLEIEDRLESLICRVGEKSTSSLESNLEGLAGVLEADLPNYKNKILRILCFVARLLPEKMTVYTTLVGLLNARNYNFGGEFVEAMIRHLKETIKLNAYNEAIYLVRFLCDLVNCHVIAAPSMVAMFESFVGVTQEEDIPQVRSDWYVYAVLSSLPWVGKELYEKKDVEMDQILSQIEAYLKQRQKLHLSILQVWSAEKPHPQEEYLDCLWAQVQKLKKDRWQERHIQRPYLAFDSVLCEALQHNLPPFTPPPHTEDSVYPVPRVIFRMFDYTDAPEGPVMPGSHSVERFVIEENLHCILKSHWRERKTCAAQLLSYPEKNKIPLNYHIVEVIFGELFQLPSPPQIDVMYTTLLIELCKLQPGSLPQVLAQASEMLYTRLDTMNTTCIDRFINWFSHHLSNFQFRWNWEDWADCLSQDLDKPKPQFVREVLEKCMRLSYHQRILDIVPATFSALYPANPSNVIKYGDESNSALPGYSVAVILTNAIKNKASDKEIFNILKDIPNPNQDDYDDEGIGFNPLKIEVFVQTLLNLASKSFSHSFSALAKFHDIFKALSESDEGKLHILRVVYDVWKNHPQMIAVLLDKMIRTQIVDCAAVANWIFSPELSPDFTRFYIWEILHSTIRKMNKHVQKIQKELEDTKQRLAKQHKHRDSDDNDEDSGRKDGPLEEQIERLQEKVESAQSEQKNLFLVIFQRFIMILTEHLVRCETGGIDVNTAWYKNCRERLQQIFLQHHQTIQQYMVTLENLLFTAELDHHILTVFQQFCALQS</sequence>
<proteinExistence type="evidence at transcript level"/>
<protein>
    <recommendedName>
        <fullName>Nuclear cap-binding protein subunit 1-B</fullName>
    </recommendedName>
</protein>
<comment type="function">
    <text evidence="1">Component of the cap-binding complex (CBC), which binds cotranscriptionally to the 5'-cap of pre-mRNAs and is involved in various processes such as pre-mRNA splicing, translation regulation, nonsense-mediated mRNA decay, RNA-mediated gene silencing (RNAi) by microRNAs (miRNAs) and mRNA export. The CBC complex is involved in mRNA export from the nucleus, leading to the recruitment of the mRNA export machinery to the 5'-end of mRNA and to mRNA export in a 5' to 3' direction through the nuclear pore. The CBC complex is also involved in mediating U snRNA and intronless mRNAs export from the nucleus. The CBC complex is essential for a pioneer round of mRNA translation, before steady state translation when the CBC complex is replaced by cytoplasmic cap-binding protein eIF4E. The pioneer round of mRNA translation mediated by the CBC complex plays a central role in nonsense-mediated mRNA decay (NMD), NMD only taking place in mRNAs bound to the CBC complex, but not on eIF4E-bound mRNAs. The CBC complex enhances NMD in mRNAs containing at least one exon-junction complex (EJC), promoting the interaction between UPF1 and UPF2. The CBC complex is also involved in 'failsafe' NMD, which is independent of the EJC complex, while it does not participate in Staufen-mediated mRNA decay (SMD). During cell proliferation, the CBC complex is also involved in microRNAs (miRNAs) biogenesis via its interaction with SRRT/ARS2 and is required for miRNA-mediated RNA interference. The CBC complex also acts as a negative regulator of parn, thereby acting as an inhibitor of mRNA deadenylation. In the CBC complex, NCBP1/CBP80 does not bind directly capped RNAs (m7GpppG-capped RNA) but is required to stabilize the movement of the N-terminal loop of NCBP2/CBP20 and lock the CBC into a high affinity cap-binding state with the cap structure. Associates with NCBP3 to form an alternative cap-binding complex (CBC) which plays a key role in mRNA export. The conventional CBC with NCBP2 binds both small nuclear RNA (snRNA) and messenger (mRNA) and is involved in their export from the nucleus whereas the alternative CBC with NCBP3 does not bind snRNA and associates only with mRNA thereby playing a role only in mRNA export (By similarity).</text>
</comment>
<comment type="subunit">
    <text evidence="1">Component of the nuclear cap-binding complex (CBC), a heterodimer composed of ncbp1/cbp80 and ncbp2/cbp20 that interacts with m7GpppG-capped RNA. Component of an alternative nuclear cap-binding complex (CBC) composed of ncbp1/cbp80 and ncbp3 (By similarity).</text>
</comment>
<comment type="subcellular location">
    <subcellularLocation>
        <location evidence="1">Nucleus</location>
    </subcellularLocation>
    <subcellularLocation>
        <location evidence="1">Cytoplasm</location>
    </subcellularLocation>
</comment>
<comment type="similarity">
    <text evidence="4">Belongs to the NCBP1 family.</text>
</comment>
<gene>
    <name type="primary">ncbp1-b</name>
</gene>
<evidence type="ECO:0000250" key="1">
    <source>
        <dbReference type="UniProtKB" id="Q09161"/>
    </source>
</evidence>
<evidence type="ECO:0000255" key="2"/>
<evidence type="ECO:0000256" key="3">
    <source>
        <dbReference type="SAM" id="MobiDB-lite"/>
    </source>
</evidence>
<evidence type="ECO:0000305" key="4"/>
<keyword id="KW-0175">Coiled coil</keyword>
<keyword id="KW-0963">Cytoplasm</keyword>
<keyword id="KW-0506">mRNA capping</keyword>
<keyword id="KW-0507">mRNA processing</keyword>
<keyword id="KW-0508">mRNA splicing</keyword>
<keyword id="KW-0509">mRNA transport</keyword>
<keyword id="KW-0866">Nonsense-mediated mRNA decay</keyword>
<keyword id="KW-0539">Nucleus</keyword>
<keyword id="KW-1185">Reference proteome</keyword>
<keyword id="KW-0694">RNA-binding</keyword>
<keyword id="KW-0943">RNA-mediated gene silencing</keyword>
<keyword id="KW-0810">Translation regulation</keyword>
<keyword id="KW-0813">Transport</keyword>
<name>NBP1B_XENLA</name>